<feature type="chain" id="PRO_0000112338" description="Carbamoyl phosphate synthase small chain">
    <location>
        <begin position="1"/>
        <end position="383"/>
    </location>
</feature>
<feature type="domain" description="Glutamine amidotransferase type-1" evidence="1">
    <location>
        <begin position="194"/>
        <end position="381"/>
    </location>
</feature>
<feature type="region of interest" description="CPSase" evidence="1">
    <location>
        <begin position="1"/>
        <end position="190"/>
    </location>
</feature>
<feature type="active site" description="Nucleophile" evidence="1">
    <location>
        <position position="271"/>
    </location>
</feature>
<feature type="active site" evidence="1">
    <location>
        <position position="354"/>
    </location>
</feature>
<feature type="active site" evidence="1">
    <location>
        <position position="356"/>
    </location>
</feature>
<feature type="binding site" evidence="1">
    <location>
        <position position="51"/>
    </location>
    <ligand>
        <name>L-glutamine</name>
        <dbReference type="ChEBI" id="CHEBI:58359"/>
    </ligand>
</feature>
<feature type="binding site" evidence="1">
    <location>
        <position position="242"/>
    </location>
    <ligand>
        <name>L-glutamine</name>
        <dbReference type="ChEBI" id="CHEBI:58359"/>
    </ligand>
</feature>
<feature type="binding site" evidence="1">
    <location>
        <position position="244"/>
    </location>
    <ligand>
        <name>L-glutamine</name>
        <dbReference type="ChEBI" id="CHEBI:58359"/>
    </ligand>
</feature>
<feature type="binding site" evidence="1">
    <location>
        <position position="272"/>
    </location>
    <ligand>
        <name>L-glutamine</name>
        <dbReference type="ChEBI" id="CHEBI:58359"/>
    </ligand>
</feature>
<feature type="binding site" evidence="1">
    <location>
        <position position="275"/>
    </location>
    <ligand>
        <name>L-glutamine</name>
        <dbReference type="ChEBI" id="CHEBI:58359"/>
    </ligand>
</feature>
<feature type="binding site" evidence="1">
    <location>
        <position position="311"/>
    </location>
    <ligand>
        <name>L-glutamine</name>
        <dbReference type="ChEBI" id="CHEBI:58359"/>
    </ligand>
</feature>
<feature type="binding site" evidence="1">
    <location>
        <position position="313"/>
    </location>
    <ligand>
        <name>L-glutamine</name>
        <dbReference type="ChEBI" id="CHEBI:58359"/>
    </ligand>
</feature>
<feature type="binding site" evidence="1">
    <location>
        <position position="314"/>
    </location>
    <ligand>
        <name>L-glutamine</name>
        <dbReference type="ChEBI" id="CHEBI:58359"/>
    </ligand>
</feature>
<gene>
    <name evidence="1" type="primary">carA</name>
    <name type="synonym">pyrA</name>
    <name type="ordered locus">SYNW1026</name>
</gene>
<dbReference type="EC" id="6.3.5.5" evidence="1"/>
<dbReference type="EMBL" id="BX569691">
    <property type="protein sequence ID" value="CAE07541.1"/>
    <property type="molecule type" value="Genomic_DNA"/>
</dbReference>
<dbReference type="RefSeq" id="WP_011127891.1">
    <property type="nucleotide sequence ID" value="NC_005070.1"/>
</dbReference>
<dbReference type="SMR" id="Q7U7F9"/>
<dbReference type="STRING" id="84588.SYNW1026"/>
<dbReference type="MEROPS" id="C26.954"/>
<dbReference type="KEGG" id="syw:SYNW1026"/>
<dbReference type="eggNOG" id="COG0505">
    <property type="taxonomic scope" value="Bacteria"/>
</dbReference>
<dbReference type="HOGENOM" id="CLU_035901_2_1_3"/>
<dbReference type="UniPathway" id="UPA00068">
    <property type="reaction ID" value="UER00171"/>
</dbReference>
<dbReference type="UniPathway" id="UPA00070">
    <property type="reaction ID" value="UER00115"/>
</dbReference>
<dbReference type="Proteomes" id="UP000001422">
    <property type="component" value="Chromosome"/>
</dbReference>
<dbReference type="GO" id="GO:0005524">
    <property type="term" value="F:ATP binding"/>
    <property type="evidence" value="ECO:0007669"/>
    <property type="project" value="UniProtKB-UniRule"/>
</dbReference>
<dbReference type="GO" id="GO:0004088">
    <property type="term" value="F:carbamoyl-phosphate synthase (glutamine-hydrolyzing) activity"/>
    <property type="evidence" value="ECO:0007669"/>
    <property type="project" value="UniProtKB-UniRule"/>
</dbReference>
<dbReference type="GO" id="GO:0004359">
    <property type="term" value="F:glutaminase activity"/>
    <property type="evidence" value="ECO:0007669"/>
    <property type="project" value="RHEA"/>
</dbReference>
<dbReference type="GO" id="GO:0006207">
    <property type="term" value="P:'de novo' pyrimidine nucleobase biosynthetic process"/>
    <property type="evidence" value="ECO:0007669"/>
    <property type="project" value="InterPro"/>
</dbReference>
<dbReference type="GO" id="GO:0044205">
    <property type="term" value="P:'de novo' UMP biosynthetic process"/>
    <property type="evidence" value="ECO:0007669"/>
    <property type="project" value="UniProtKB-UniRule"/>
</dbReference>
<dbReference type="GO" id="GO:0006541">
    <property type="term" value="P:glutamine metabolic process"/>
    <property type="evidence" value="ECO:0007669"/>
    <property type="project" value="InterPro"/>
</dbReference>
<dbReference type="GO" id="GO:0006526">
    <property type="term" value="P:L-arginine biosynthetic process"/>
    <property type="evidence" value="ECO:0007669"/>
    <property type="project" value="UniProtKB-UniRule"/>
</dbReference>
<dbReference type="CDD" id="cd01744">
    <property type="entry name" value="GATase1_CPSase"/>
    <property type="match status" value="1"/>
</dbReference>
<dbReference type="FunFam" id="3.50.30.20:FF:000001">
    <property type="entry name" value="Carbamoyl-phosphate synthase small chain"/>
    <property type="match status" value="1"/>
</dbReference>
<dbReference type="Gene3D" id="3.40.50.880">
    <property type="match status" value="1"/>
</dbReference>
<dbReference type="Gene3D" id="3.50.30.20">
    <property type="entry name" value="Carbamoyl-phosphate synthase small subunit, N-terminal domain"/>
    <property type="match status" value="1"/>
</dbReference>
<dbReference type="HAMAP" id="MF_01209">
    <property type="entry name" value="CPSase_S_chain"/>
    <property type="match status" value="1"/>
</dbReference>
<dbReference type="InterPro" id="IPR050472">
    <property type="entry name" value="Anth_synth/Amidotransfase"/>
</dbReference>
<dbReference type="InterPro" id="IPR006274">
    <property type="entry name" value="CarbamoylP_synth_ssu"/>
</dbReference>
<dbReference type="InterPro" id="IPR002474">
    <property type="entry name" value="CarbamoylP_synth_ssu_N"/>
</dbReference>
<dbReference type="InterPro" id="IPR036480">
    <property type="entry name" value="CarbP_synth_ssu_N_sf"/>
</dbReference>
<dbReference type="InterPro" id="IPR029062">
    <property type="entry name" value="Class_I_gatase-like"/>
</dbReference>
<dbReference type="InterPro" id="IPR035686">
    <property type="entry name" value="CPSase_GATase1"/>
</dbReference>
<dbReference type="InterPro" id="IPR017926">
    <property type="entry name" value="GATASE"/>
</dbReference>
<dbReference type="NCBIfam" id="TIGR01368">
    <property type="entry name" value="CPSaseIIsmall"/>
    <property type="match status" value="1"/>
</dbReference>
<dbReference type="NCBIfam" id="NF009475">
    <property type="entry name" value="PRK12838.1"/>
    <property type="match status" value="1"/>
</dbReference>
<dbReference type="PANTHER" id="PTHR43418:SF7">
    <property type="entry name" value="CARBAMOYL-PHOSPHATE SYNTHASE SMALL CHAIN"/>
    <property type="match status" value="1"/>
</dbReference>
<dbReference type="PANTHER" id="PTHR43418">
    <property type="entry name" value="MULTIFUNCTIONAL TRYPTOPHAN BIOSYNTHESIS PROTEIN-RELATED"/>
    <property type="match status" value="1"/>
</dbReference>
<dbReference type="Pfam" id="PF00988">
    <property type="entry name" value="CPSase_sm_chain"/>
    <property type="match status" value="1"/>
</dbReference>
<dbReference type="Pfam" id="PF00117">
    <property type="entry name" value="GATase"/>
    <property type="match status" value="1"/>
</dbReference>
<dbReference type="PRINTS" id="PR00097">
    <property type="entry name" value="ANTSNTHASEII"/>
</dbReference>
<dbReference type="PRINTS" id="PR00099">
    <property type="entry name" value="CPSGATASE"/>
</dbReference>
<dbReference type="PRINTS" id="PR00096">
    <property type="entry name" value="GATASE"/>
</dbReference>
<dbReference type="SMART" id="SM01097">
    <property type="entry name" value="CPSase_sm_chain"/>
    <property type="match status" value="1"/>
</dbReference>
<dbReference type="SUPFAM" id="SSF52021">
    <property type="entry name" value="Carbamoyl phosphate synthetase, small subunit N-terminal domain"/>
    <property type="match status" value="1"/>
</dbReference>
<dbReference type="SUPFAM" id="SSF52317">
    <property type="entry name" value="Class I glutamine amidotransferase-like"/>
    <property type="match status" value="1"/>
</dbReference>
<dbReference type="PROSITE" id="PS51273">
    <property type="entry name" value="GATASE_TYPE_1"/>
    <property type="match status" value="1"/>
</dbReference>
<evidence type="ECO:0000255" key="1">
    <source>
        <dbReference type="HAMAP-Rule" id="MF_01209"/>
    </source>
</evidence>
<proteinExistence type="inferred from homology"/>
<protein>
    <recommendedName>
        <fullName evidence="1">Carbamoyl phosphate synthase small chain</fullName>
        <ecNumber evidence="1">6.3.5.5</ecNumber>
    </recommendedName>
    <alternativeName>
        <fullName evidence="1">Carbamoyl phosphate synthetase glutamine chain</fullName>
    </alternativeName>
</protein>
<comment type="function">
    <text evidence="1">Small subunit of the glutamine-dependent carbamoyl phosphate synthetase (CPSase). CPSase catalyzes the formation of carbamoyl phosphate from the ammonia moiety of glutamine, carbonate, and phosphate donated by ATP, constituting the first step of 2 biosynthetic pathways, one leading to arginine and/or urea and the other to pyrimidine nucleotides. The small subunit (glutamine amidotransferase) binds and cleaves glutamine to supply the large subunit with the substrate ammonia.</text>
</comment>
<comment type="catalytic activity">
    <reaction evidence="1">
        <text>hydrogencarbonate + L-glutamine + 2 ATP + H2O = carbamoyl phosphate + L-glutamate + 2 ADP + phosphate + 2 H(+)</text>
        <dbReference type="Rhea" id="RHEA:18633"/>
        <dbReference type="ChEBI" id="CHEBI:15377"/>
        <dbReference type="ChEBI" id="CHEBI:15378"/>
        <dbReference type="ChEBI" id="CHEBI:17544"/>
        <dbReference type="ChEBI" id="CHEBI:29985"/>
        <dbReference type="ChEBI" id="CHEBI:30616"/>
        <dbReference type="ChEBI" id="CHEBI:43474"/>
        <dbReference type="ChEBI" id="CHEBI:58228"/>
        <dbReference type="ChEBI" id="CHEBI:58359"/>
        <dbReference type="ChEBI" id="CHEBI:456216"/>
        <dbReference type="EC" id="6.3.5.5"/>
    </reaction>
</comment>
<comment type="catalytic activity">
    <molecule>Carbamoyl phosphate synthase small chain</molecule>
    <reaction evidence="1">
        <text>L-glutamine + H2O = L-glutamate + NH4(+)</text>
        <dbReference type="Rhea" id="RHEA:15889"/>
        <dbReference type="ChEBI" id="CHEBI:15377"/>
        <dbReference type="ChEBI" id="CHEBI:28938"/>
        <dbReference type="ChEBI" id="CHEBI:29985"/>
        <dbReference type="ChEBI" id="CHEBI:58359"/>
    </reaction>
</comment>
<comment type="pathway">
    <text evidence="1">Amino-acid biosynthesis; L-arginine biosynthesis; carbamoyl phosphate from bicarbonate: step 1/1.</text>
</comment>
<comment type="pathway">
    <text evidence="1">Pyrimidine metabolism; UMP biosynthesis via de novo pathway; (S)-dihydroorotate from bicarbonate: step 1/3.</text>
</comment>
<comment type="subunit">
    <text evidence="1">Composed of two chains; the small (or glutamine) chain promotes the hydrolysis of glutamine to ammonia, which is used by the large (or ammonia) chain to synthesize carbamoyl phosphate. Tetramer of heterodimers (alpha,beta)4.</text>
</comment>
<comment type="similarity">
    <text evidence="1">Belongs to the CarA family.</text>
</comment>
<accession>Q7U7F9</accession>
<organism>
    <name type="scientific">Parasynechococcus marenigrum (strain WH8102)</name>
    <dbReference type="NCBI Taxonomy" id="84588"/>
    <lineage>
        <taxon>Bacteria</taxon>
        <taxon>Bacillati</taxon>
        <taxon>Cyanobacteriota</taxon>
        <taxon>Cyanophyceae</taxon>
        <taxon>Synechococcales</taxon>
        <taxon>Prochlorococcaceae</taxon>
        <taxon>Parasynechococcus</taxon>
        <taxon>Parasynechococcus marenigrum</taxon>
    </lineage>
</organism>
<keyword id="KW-0028">Amino-acid biosynthesis</keyword>
<keyword id="KW-0055">Arginine biosynthesis</keyword>
<keyword id="KW-0067">ATP-binding</keyword>
<keyword id="KW-0315">Glutamine amidotransferase</keyword>
<keyword id="KW-0436">Ligase</keyword>
<keyword id="KW-0547">Nucleotide-binding</keyword>
<keyword id="KW-0665">Pyrimidine biosynthesis</keyword>
<name>CARA_PARMW</name>
<reference key="1">
    <citation type="journal article" date="2003" name="Nature">
        <title>The genome of a motile marine Synechococcus.</title>
        <authorList>
            <person name="Palenik B."/>
            <person name="Brahamsha B."/>
            <person name="Larimer F.W."/>
            <person name="Land M.L."/>
            <person name="Hauser L."/>
            <person name="Chain P."/>
            <person name="Lamerdin J.E."/>
            <person name="Regala W."/>
            <person name="Allen E.E."/>
            <person name="McCarren J."/>
            <person name="Paulsen I.T."/>
            <person name="Dufresne A."/>
            <person name="Partensky F."/>
            <person name="Webb E.A."/>
            <person name="Waterbury J."/>
        </authorList>
    </citation>
    <scope>NUCLEOTIDE SEQUENCE [LARGE SCALE GENOMIC DNA]</scope>
    <source>
        <strain>WH8102</strain>
    </source>
</reference>
<sequence length="383" mass="41105">MPHPSSRQAHLVLADGTVLTGDAFGHRGSVVGEVVFNTGMTGYQEVLTDPSYAGQLVTFTYPELGNTGVNGDDQEADHPHARGVIARQLAPCASNWRCSESLDNWMERHGLVGICGVDTRALVRRLRDGGAINGVISSDGRSPADLLAEVRHAPSMEGLNLASQVSTTEPYEWSSPCRVGFDQRLKQHPDLPYRVVAIDFGIKRAILDRLVAHGCAVTVLPSDADLDTVMSHQPEGVFLSNGPGDPAAVDSGIDLARSLLERANLPLFGICLGHQILGLALGGKTFKLGYGHRGLNHPCGTSGQVEITSQNHGFAISADSLPEPMVEVTHLNLNDRTVAAFQHRHQPVFGIQYHPEASPGPHDADHHFGRFVALMADRRDVGG</sequence>